<name>MSH5_RAT</name>
<dbReference type="EMBL" id="BX883045">
    <property type="protein sequence ID" value="CAE83984.1"/>
    <property type="molecule type" value="Genomic_DNA"/>
</dbReference>
<dbReference type="EMBL" id="BC083904">
    <property type="protein sequence ID" value="AAH83904.1"/>
    <property type="molecule type" value="mRNA"/>
</dbReference>
<dbReference type="RefSeq" id="NP_997701.2">
    <property type="nucleotide sequence ID" value="NM_212536.2"/>
</dbReference>
<dbReference type="RefSeq" id="XP_017457063.1">
    <property type="nucleotide sequence ID" value="XM_017601574.1"/>
</dbReference>
<dbReference type="RefSeq" id="XP_063135074.1">
    <property type="nucleotide sequence ID" value="XM_063279004.1"/>
</dbReference>
<dbReference type="RefSeq" id="XP_063135075.1">
    <property type="nucleotide sequence ID" value="XM_063279005.1"/>
</dbReference>
<dbReference type="SMR" id="Q6MG62"/>
<dbReference type="FunCoup" id="Q6MG62">
    <property type="interactions" value="509"/>
</dbReference>
<dbReference type="STRING" id="10116.ENSRNOP00000057489"/>
<dbReference type="GlyGen" id="Q6MG62">
    <property type="glycosylation" value="1 site"/>
</dbReference>
<dbReference type="iPTMnet" id="Q6MG62"/>
<dbReference type="PhosphoSitePlus" id="Q6MG62"/>
<dbReference type="PaxDb" id="10116-ENSRNOP00000057489"/>
<dbReference type="Ensembl" id="ENSRNOT00000060762.3">
    <property type="protein sequence ID" value="ENSRNOP00000057489.3"/>
    <property type="gene ID" value="ENSRNOG00000000857.7"/>
</dbReference>
<dbReference type="GeneID" id="294252"/>
<dbReference type="KEGG" id="rno:294252"/>
<dbReference type="UCSC" id="RGD:1303008">
    <property type="organism name" value="rat"/>
</dbReference>
<dbReference type="AGR" id="RGD:1303008"/>
<dbReference type="CTD" id="4439"/>
<dbReference type="RGD" id="1303008">
    <property type="gene designation" value="Msh5"/>
</dbReference>
<dbReference type="eggNOG" id="KOG0221">
    <property type="taxonomic scope" value="Eukaryota"/>
</dbReference>
<dbReference type="GeneTree" id="ENSGT00550000074977"/>
<dbReference type="HOGENOM" id="CLU_002472_8_0_1"/>
<dbReference type="InParanoid" id="Q6MG62"/>
<dbReference type="OMA" id="CSVYFMP"/>
<dbReference type="OrthoDB" id="29596at2759"/>
<dbReference type="PhylomeDB" id="Q6MG62"/>
<dbReference type="TreeFam" id="TF314549"/>
<dbReference type="PRO" id="PR:Q6MG62"/>
<dbReference type="Proteomes" id="UP000002494">
    <property type="component" value="Chromosome 20"/>
</dbReference>
<dbReference type="Bgee" id="ENSRNOG00000000857">
    <property type="expression patterns" value="Expressed in testis and 14 other cell types or tissues"/>
</dbReference>
<dbReference type="ExpressionAtlas" id="Q6MG62">
    <property type="expression patterns" value="baseline and differential"/>
</dbReference>
<dbReference type="GO" id="GO:0005634">
    <property type="term" value="C:nucleus"/>
    <property type="evidence" value="ECO:0000318"/>
    <property type="project" value="GO_Central"/>
</dbReference>
<dbReference type="GO" id="GO:0000795">
    <property type="term" value="C:synaptonemal complex"/>
    <property type="evidence" value="ECO:0000266"/>
    <property type="project" value="RGD"/>
</dbReference>
<dbReference type="GO" id="GO:0005524">
    <property type="term" value="F:ATP binding"/>
    <property type="evidence" value="ECO:0007669"/>
    <property type="project" value="UniProtKB-KW"/>
</dbReference>
<dbReference type="GO" id="GO:0140664">
    <property type="term" value="F:ATP-dependent DNA damage sensor activity"/>
    <property type="evidence" value="ECO:0007669"/>
    <property type="project" value="InterPro"/>
</dbReference>
<dbReference type="GO" id="GO:0003690">
    <property type="term" value="F:double-stranded DNA binding"/>
    <property type="evidence" value="ECO:0000318"/>
    <property type="project" value="GO_Central"/>
</dbReference>
<dbReference type="GO" id="GO:0030983">
    <property type="term" value="F:mismatched DNA binding"/>
    <property type="evidence" value="ECO:0007669"/>
    <property type="project" value="InterPro"/>
</dbReference>
<dbReference type="GO" id="GO:0051026">
    <property type="term" value="P:chiasma assembly"/>
    <property type="evidence" value="ECO:0000318"/>
    <property type="project" value="GO_Central"/>
</dbReference>
<dbReference type="GO" id="GO:0007292">
    <property type="term" value="P:female gamete generation"/>
    <property type="evidence" value="ECO:0000266"/>
    <property type="project" value="RGD"/>
</dbReference>
<dbReference type="GO" id="GO:0007129">
    <property type="term" value="P:homologous chromosome pairing at meiosis"/>
    <property type="evidence" value="ECO:0000266"/>
    <property type="project" value="RGD"/>
</dbReference>
<dbReference type="GO" id="GO:0007127">
    <property type="term" value="P:meiosis I"/>
    <property type="evidence" value="ECO:0000266"/>
    <property type="project" value="RGD"/>
</dbReference>
<dbReference type="GO" id="GO:0006298">
    <property type="term" value="P:mismatch repair"/>
    <property type="evidence" value="ECO:0007669"/>
    <property type="project" value="InterPro"/>
</dbReference>
<dbReference type="CDD" id="cd03281">
    <property type="entry name" value="ABC_MSH5_euk"/>
    <property type="match status" value="1"/>
</dbReference>
<dbReference type="FunFam" id="1.10.1420.10:FF:000008">
    <property type="entry name" value="MutS homolog 5 (E. coli)"/>
    <property type="match status" value="1"/>
</dbReference>
<dbReference type="FunFam" id="3.40.50.300:FF:000820">
    <property type="entry name" value="MutS homolog 5 (E. coli)"/>
    <property type="match status" value="1"/>
</dbReference>
<dbReference type="Gene3D" id="1.10.1420.10">
    <property type="match status" value="1"/>
</dbReference>
<dbReference type="Gene3D" id="3.40.50.300">
    <property type="entry name" value="P-loop containing nucleotide triphosphate hydrolases"/>
    <property type="match status" value="1"/>
</dbReference>
<dbReference type="InterPro" id="IPR011184">
    <property type="entry name" value="DNA_mismatch_repair_Msh2"/>
</dbReference>
<dbReference type="InterPro" id="IPR000432">
    <property type="entry name" value="DNA_mismatch_repair_MutS_C"/>
</dbReference>
<dbReference type="InterPro" id="IPR007861">
    <property type="entry name" value="DNA_mismatch_repair_MutS_clamp"/>
</dbReference>
<dbReference type="InterPro" id="IPR007696">
    <property type="entry name" value="DNA_mismatch_repair_MutS_core"/>
</dbReference>
<dbReference type="InterPro" id="IPR036187">
    <property type="entry name" value="DNA_mismatch_repair_MutS_sf"/>
</dbReference>
<dbReference type="InterPro" id="IPR045076">
    <property type="entry name" value="MutS"/>
</dbReference>
<dbReference type="InterPro" id="IPR027417">
    <property type="entry name" value="P-loop_NTPase"/>
</dbReference>
<dbReference type="PANTHER" id="PTHR11361">
    <property type="entry name" value="DNA MISMATCH REPAIR PROTEIN MUTS FAMILY MEMBER"/>
    <property type="match status" value="1"/>
</dbReference>
<dbReference type="PANTHER" id="PTHR11361:SF20">
    <property type="entry name" value="MUTS PROTEIN HOMOLOG 5"/>
    <property type="match status" value="1"/>
</dbReference>
<dbReference type="Pfam" id="PF05192">
    <property type="entry name" value="MutS_III"/>
    <property type="match status" value="1"/>
</dbReference>
<dbReference type="Pfam" id="PF05190">
    <property type="entry name" value="MutS_IV"/>
    <property type="match status" value="1"/>
</dbReference>
<dbReference type="Pfam" id="PF00488">
    <property type="entry name" value="MutS_V"/>
    <property type="match status" value="1"/>
</dbReference>
<dbReference type="PIRSF" id="PIRSF005813">
    <property type="entry name" value="MSH2"/>
    <property type="match status" value="1"/>
</dbReference>
<dbReference type="SMART" id="SM00534">
    <property type="entry name" value="MUTSac"/>
    <property type="match status" value="1"/>
</dbReference>
<dbReference type="SMART" id="SM00533">
    <property type="entry name" value="MUTSd"/>
    <property type="match status" value="1"/>
</dbReference>
<dbReference type="SUPFAM" id="SSF48334">
    <property type="entry name" value="DNA repair protein MutS, domain III"/>
    <property type="match status" value="1"/>
</dbReference>
<dbReference type="SUPFAM" id="SSF52540">
    <property type="entry name" value="P-loop containing nucleoside triphosphate hydrolases"/>
    <property type="match status" value="1"/>
</dbReference>
<dbReference type="PROSITE" id="PS00486">
    <property type="entry name" value="DNA_MISMATCH_REPAIR_2"/>
    <property type="match status" value="1"/>
</dbReference>
<reference key="1">
    <citation type="journal article" date="2004" name="Genome Res.">
        <title>The genomic sequence and comparative analysis of the rat major histocompatibility complex.</title>
        <authorList>
            <person name="Hurt P."/>
            <person name="Walter L."/>
            <person name="Sudbrak R."/>
            <person name="Klages S."/>
            <person name="Mueller I."/>
            <person name="Shiina T."/>
            <person name="Inoko H."/>
            <person name="Lehrach H."/>
            <person name="Guenther E."/>
            <person name="Reinhardt R."/>
            <person name="Himmelbauer H."/>
        </authorList>
    </citation>
    <scope>NUCLEOTIDE SEQUENCE [LARGE SCALE GENOMIC DNA]</scope>
    <source>
        <strain>Brown Norway</strain>
    </source>
</reference>
<reference key="2">
    <citation type="journal article" date="2004" name="Genome Res.">
        <title>The status, quality, and expansion of the NIH full-length cDNA project: the Mammalian Gene Collection (MGC).</title>
        <authorList>
            <consortium name="The MGC Project Team"/>
        </authorList>
    </citation>
    <scope>NUCLEOTIDE SEQUENCE [LARGE SCALE MRNA]</scope>
    <source>
        <tissue>Testis</tissue>
    </source>
</reference>
<evidence type="ECO:0000250" key="1"/>
<evidence type="ECO:0000250" key="2">
    <source>
        <dbReference type="UniProtKB" id="Q9QUM7"/>
    </source>
</evidence>
<evidence type="ECO:0000255" key="3"/>
<evidence type="ECO:0000256" key="4">
    <source>
        <dbReference type="SAM" id="MobiDB-lite"/>
    </source>
</evidence>
<evidence type="ECO:0000305" key="5"/>
<sequence>MAFRATPGRTPPGPGPGVPSASFSSPQPAMAAPGGIEEEDEEEPAEIHLCVLWSSGYLGIAYYDTSDSTIHFMPDAPDHESLKLLQRVLDEINPQSVVTSAKQDEAMTQFLGKLASQEHREPKRPEIILLPSVDFGPEISKQRLLSGNYSFISESMTATEKILFLSSIIPFDCVLTVRALGGLLKFLSRRRVGVELEDYSVGVPILGFKKFVLTHLVSIDQDTYSVLQIFKSESHPSVYKVASGLKEGLSLFGILNRCRCRWGQKLLRLWFTRPTRELRELNSRLDVIEFFLMPQNLDMAQMMHRLLSHIKNVPLILKRMKLSHTKVSDWQVLYKTVYSALGLRDACRSLPQSIQLFRDITQEFSDDLHHIASLIGKVVDFEESLAENRFTVLPNIDPEIDAKKRRLMGLPSFLTEVAQKELENLDSCIPSCSVIYIPLIGFLLSIPRLSFMVEASDFEIEGLDFMFLSEDKLHYRSARTKELDALLGDLHCEIRDQEMLLMHQLQCQVLARAPVLTRVLDLASRLDVLLALASAARDYGYSRPHYSPCIQGVRIKNGRHPLMELCARTFVPNSTDCGGDQGRVKVITGPNSSGKSIYLKQVGLITFMALVGSFVPAEEAEIGVIDAIFTRIHSCESISLGLSTFMIDLNQVAKAVNNATEHSLVLIDEFGKGTNSVDGLALLTAVLRHWLALGPSCPHIFVATNFLSLVQLQLLPQGPLVQYLTMETCEDGNDLVFFYQLCHGVASASHASYTAAQAGLPDPLIARGKEVSDSIRSGKPVKPMHELVRRTQMENCQALVDKFLKLDLEDPSLDLDIFISQEVLPAATTIL</sequence>
<accession>Q6MG62</accession>
<accession>Q5XHZ5</accession>
<gene>
    <name type="primary">Msh5</name>
</gene>
<organism>
    <name type="scientific">Rattus norvegicus</name>
    <name type="common">Rat</name>
    <dbReference type="NCBI Taxonomy" id="10116"/>
    <lineage>
        <taxon>Eukaryota</taxon>
        <taxon>Metazoa</taxon>
        <taxon>Chordata</taxon>
        <taxon>Craniata</taxon>
        <taxon>Vertebrata</taxon>
        <taxon>Euteleostomi</taxon>
        <taxon>Mammalia</taxon>
        <taxon>Eutheria</taxon>
        <taxon>Euarchontoglires</taxon>
        <taxon>Glires</taxon>
        <taxon>Rodentia</taxon>
        <taxon>Myomorpha</taxon>
        <taxon>Muroidea</taxon>
        <taxon>Muridae</taxon>
        <taxon>Murinae</taxon>
        <taxon>Rattus</taxon>
    </lineage>
</organism>
<proteinExistence type="evidence at transcript level"/>
<feature type="chain" id="PRO_0000115204" description="MutS protein homolog 5">
    <location>
        <begin position="1"/>
        <end position="831"/>
    </location>
</feature>
<feature type="region of interest" description="Disordered" evidence="4">
    <location>
        <begin position="1"/>
        <end position="43"/>
    </location>
</feature>
<feature type="binding site" evidence="3">
    <location>
        <begin position="589"/>
        <end position="596"/>
    </location>
    <ligand>
        <name>ATP</name>
        <dbReference type="ChEBI" id="CHEBI:30616"/>
    </ligand>
</feature>
<feature type="sequence conflict" description="In Ref. 2; AAH83904." evidence="5" ref="2">
    <location>
        <position position="379"/>
    </location>
</feature>
<comment type="function">
    <text evidence="1">Involved in DNA mismatch repair and meiotic recombination processes. Facilitates crossovers between homologs during meiosis (By similarity).</text>
</comment>
<comment type="subunit">
    <text evidence="1 2">Heterooligomer of MSH4 and MSH5. Interacts with HJURP (By similarity). Interacts with C7h12orf40/REDIC1 (By similarity).</text>
</comment>
<comment type="similarity">
    <text evidence="5">Belongs to the DNA mismatch repair MutS family.</text>
</comment>
<keyword id="KW-0067">ATP-binding</keyword>
<keyword id="KW-0227">DNA damage</keyword>
<keyword id="KW-0234">DNA repair</keyword>
<keyword id="KW-0238">DNA-binding</keyword>
<keyword id="KW-0469">Meiosis</keyword>
<keyword id="KW-0547">Nucleotide-binding</keyword>
<keyword id="KW-1185">Reference proteome</keyword>
<protein>
    <recommendedName>
        <fullName>MutS protein homolog 5</fullName>
    </recommendedName>
</protein>